<gene>
    <name evidence="1" type="primary">rpl10e</name>
    <name type="ordered locus">YG5714_1923</name>
</gene>
<organism>
    <name type="scientific">Saccharolobus islandicus (strain Y.G.57.14 / Yellowstone #1)</name>
    <name type="common">Sulfolobus islandicus</name>
    <dbReference type="NCBI Taxonomy" id="439386"/>
    <lineage>
        <taxon>Archaea</taxon>
        <taxon>Thermoproteota</taxon>
        <taxon>Thermoprotei</taxon>
        <taxon>Sulfolobales</taxon>
        <taxon>Sulfolobaceae</taxon>
        <taxon>Saccharolobus</taxon>
    </lineage>
</organism>
<accession>C3N7I5</accession>
<comment type="similarity">
    <text evidence="1">Belongs to the universal ribosomal protein uL16 family.</text>
</comment>
<reference key="1">
    <citation type="journal article" date="2009" name="Proc. Natl. Acad. Sci. U.S.A.">
        <title>Biogeography of the Sulfolobus islandicus pan-genome.</title>
        <authorList>
            <person name="Reno M.L."/>
            <person name="Held N.L."/>
            <person name="Fields C.J."/>
            <person name="Burke P.V."/>
            <person name="Whitaker R.J."/>
        </authorList>
    </citation>
    <scope>NUCLEOTIDE SEQUENCE [LARGE SCALE GENOMIC DNA]</scope>
    <source>
        <strain>Y.G.57.14 / Yellowstone #1</strain>
    </source>
</reference>
<protein>
    <recommendedName>
        <fullName evidence="1">Large ribosomal subunit protein uL16</fullName>
    </recommendedName>
    <alternativeName>
        <fullName evidence="2">50S ribosomal protein L10e</fullName>
    </alternativeName>
</protein>
<evidence type="ECO:0000255" key="1">
    <source>
        <dbReference type="HAMAP-Rule" id="MF_00448"/>
    </source>
</evidence>
<evidence type="ECO:0000305" key="2"/>
<feature type="chain" id="PRO_1000206203" description="Large ribosomal subunit protein uL16">
    <location>
        <begin position="1"/>
        <end position="178"/>
    </location>
</feature>
<keyword id="KW-0687">Ribonucleoprotein</keyword>
<keyword id="KW-0689">Ribosomal protein</keyword>
<proteinExistence type="inferred from homology"/>
<dbReference type="EMBL" id="CP001403">
    <property type="protein sequence ID" value="ACP46179.1"/>
    <property type="molecule type" value="Genomic_DNA"/>
</dbReference>
<dbReference type="RefSeq" id="WP_012711781.1">
    <property type="nucleotide sequence ID" value="NC_012622.1"/>
</dbReference>
<dbReference type="SMR" id="C3N7I5"/>
<dbReference type="KEGG" id="siy:YG5714_1923"/>
<dbReference type="HOGENOM" id="CLU_084051_0_2_2"/>
<dbReference type="Proteomes" id="UP000002308">
    <property type="component" value="Chromosome"/>
</dbReference>
<dbReference type="GO" id="GO:1990904">
    <property type="term" value="C:ribonucleoprotein complex"/>
    <property type="evidence" value="ECO:0007669"/>
    <property type="project" value="UniProtKB-KW"/>
</dbReference>
<dbReference type="GO" id="GO:0005840">
    <property type="term" value="C:ribosome"/>
    <property type="evidence" value="ECO:0007669"/>
    <property type="project" value="UniProtKB-KW"/>
</dbReference>
<dbReference type="GO" id="GO:0003735">
    <property type="term" value="F:structural constituent of ribosome"/>
    <property type="evidence" value="ECO:0007669"/>
    <property type="project" value="InterPro"/>
</dbReference>
<dbReference type="GO" id="GO:0006412">
    <property type="term" value="P:translation"/>
    <property type="evidence" value="ECO:0007669"/>
    <property type="project" value="UniProtKB-UniRule"/>
</dbReference>
<dbReference type="CDD" id="cd01433">
    <property type="entry name" value="Ribosomal_L16_L10e"/>
    <property type="match status" value="1"/>
</dbReference>
<dbReference type="FunFam" id="3.90.1170.10:FF:000008">
    <property type="entry name" value="50S ribosomal protein L10e"/>
    <property type="match status" value="1"/>
</dbReference>
<dbReference type="Gene3D" id="3.90.1170.10">
    <property type="entry name" value="Ribosomal protein L10e/L16"/>
    <property type="match status" value="1"/>
</dbReference>
<dbReference type="HAMAP" id="MF_00448">
    <property type="entry name" value="Ribosomal_uL16_arch"/>
    <property type="match status" value="1"/>
</dbReference>
<dbReference type="InterPro" id="IPR047873">
    <property type="entry name" value="Ribosomal_uL16"/>
</dbReference>
<dbReference type="InterPro" id="IPR022981">
    <property type="entry name" value="Ribosomal_uL16_arc"/>
</dbReference>
<dbReference type="InterPro" id="IPR018255">
    <property type="entry name" value="Ribosomal_uL16_CS_euk_arc"/>
</dbReference>
<dbReference type="InterPro" id="IPR016180">
    <property type="entry name" value="Ribosomal_uL16_dom"/>
</dbReference>
<dbReference type="InterPro" id="IPR001197">
    <property type="entry name" value="Ribosomal_uL16_euk_arch"/>
</dbReference>
<dbReference type="InterPro" id="IPR036920">
    <property type="entry name" value="Ribosomal_uL16_sf"/>
</dbReference>
<dbReference type="NCBIfam" id="NF003236">
    <property type="entry name" value="PRK04199.1-1"/>
    <property type="match status" value="1"/>
</dbReference>
<dbReference type="NCBIfam" id="NF003239">
    <property type="entry name" value="PRK04199.1-4"/>
    <property type="match status" value="1"/>
</dbReference>
<dbReference type="PANTHER" id="PTHR11726">
    <property type="entry name" value="60S RIBOSOMAL PROTEIN L10"/>
    <property type="match status" value="1"/>
</dbReference>
<dbReference type="Pfam" id="PF00252">
    <property type="entry name" value="Ribosomal_L16"/>
    <property type="match status" value="1"/>
</dbReference>
<dbReference type="PIRSF" id="PIRSF005590">
    <property type="entry name" value="Ribosomal_L10"/>
    <property type="match status" value="1"/>
</dbReference>
<dbReference type="SUPFAM" id="SSF54686">
    <property type="entry name" value="Ribosomal protein L16p/L10e"/>
    <property type="match status" value="1"/>
</dbReference>
<dbReference type="PROSITE" id="PS01257">
    <property type="entry name" value="RIBOSOMAL_L10E"/>
    <property type="match status" value="1"/>
</dbReference>
<sequence>MPLRPGRCYRHFSGPAYTRKEYIPGIPQPKITKFTSGNPNGDYDYEVRLITTEIGQIRHNALEAVRTITLKTLTKRTGSETSFFMWILKYPHHVLRENKMMAFAGADRLQDGMRLSFGTPIGTAARIEKLGEILIVVKVKKEHLDFAKEALKIASKKLPLRTRIEIIPLRPIRQEVQS</sequence>
<name>RL10E_SACI7</name>